<evidence type="ECO:0000255" key="1">
    <source>
        <dbReference type="HAMAP-Rule" id="MF_04069"/>
    </source>
</evidence>
<evidence type="ECO:0000256" key="2">
    <source>
        <dbReference type="SAM" id="MobiDB-lite"/>
    </source>
</evidence>
<evidence type="ECO:0007829" key="3">
    <source>
        <dbReference type="PDB" id="4RWC"/>
    </source>
</evidence>
<organismHost>
    <name type="scientific">Aves</name>
    <dbReference type="NCBI Taxonomy" id="8782"/>
</organismHost>
<organismHost>
    <name type="scientific">Felis catus</name>
    <name type="common">Cat</name>
    <name type="synonym">Felis silvestris catus</name>
    <dbReference type="NCBI Taxonomy" id="9685"/>
</organismHost>
<organismHost>
    <name type="scientific">Homo sapiens</name>
    <name type="common">Human</name>
    <dbReference type="NCBI Taxonomy" id="9606"/>
</organismHost>
<organismHost>
    <name type="scientific">Panthera pardus</name>
    <name type="common">Leopard</name>
    <name type="synonym">Felis pardus</name>
    <dbReference type="NCBI Taxonomy" id="9691"/>
</organismHost>
<organismHost>
    <name type="scientific">Panthera tigris</name>
    <name type="common">Tiger</name>
    <dbReference type="NCBI Taxonomy" id="9694"/>
</organismHost>
<organismHost>
    <name type="scientific">Sus scrofa</name>
    <name type="common">Pig</name>
    <dbReference type="NCBI Taxonomy" id="9823"/>
</organismHost>
<comment type="function">
    <text evidence="1">Forms a proton-selective ion channel that is necessary for the efficient release of the viral genome during virus entry. After attaching to the cell surface, the virion enters the cell by endocytosis. Acidification of the endosome triggers M2 ion channel activity. The influx of protons into virion interior is believed to disrupt interactions between the viral ribonucleoprotein (RNP), matrix protein 1 (M1), and lipid bilayers, thereby freeing the viral genome from interaction with viral proteins and enabling RNA segments to migrate to the host cell nucleus, where influenza virus RNA transcription and replication occur. Also plays a role in viral proteins secretory pathway. Elevates the intravesicular pH of normally acidic compartments, such as trans-Golgi network, preventing newly formed hemagglutinin from premature switching to the fusion-active conformation.</text>
</comment>
<comment type="activity regulation">
    <text>The M2 protein from most influenza A strains is inhibited by amantadine and rimantadine, resulting in viral uncoating incapacity. Emergence of amantadine-resistant variants is usually rapid.</text>
</comment>
<comment type="subunit">
    <text evidence="1">Homotetramer; composed of two disulfide-linked dimers held together by non-covalent interactions. May interact with matrix protein 1.</text>
</comment>
<comment type="interaction">
    <interactant intactId="EBI-15771809">
        <id>O70632</id>
    </interactant>
    <interactant intactId="EBI-15771809">
        <id>O70632</id>
        <label>M</label>
    </interactant>
    <organismsDiffer>false</organismsDiffer>
    <experiments>2</experiments>
</comment>
<comment type="subcellular location">
    <subcellularLocation>
        <location evidence="1">Virion membrane</location>
    </subcellularLocation>
    <subcellularLocation>
        <location evidence="1">Host apical cell membrane</location>
        <topology evidence="1">Single-pass type III membrane protein</topology>
    </subcellularLocation>
    <text evidence="1">Abundantly expressed at the apical plasma membrane in infected polarized epithelial cells, in close proximity to budding and assembled virions. Minor component of virions (only 16-20 molecules/virion).</text>
</comment>
<comment type="alternative products">
    <event type="alternative splicing"/>
    <isoform>
        <id>O70632-1</id>
        <name>M2</name>
        <sequence type="displayed"/>
    </isoform>
    <isoform>
        <id>Q77Y95-1</id>
        <name>M1</name>
        <sequence type="external"/>
    </isoform>
    <text>Only the first 9 residues are shared by the 2 isoforms.</text>
</comment>
<comment type="domain">
    <text evidence="1">Cytoplasmic tail plays an important role in virion assembly and morphogenesis.</text>
</comment>
<comment type="miscellaneous">
    <text evidence="1">When the channel is activated, one or more imidazole moieties of His-37 probably become bi-protonated.</text>
</comment>
<comment type="similarity">
    <text evidence="1">Belongs to the influenza viruses matrix protein M2 family.</text>
</comment>
<protein>
    <recommendedName>
        <fullName evidence="1">Matrix protein 2</fullName>
    </recommendedName>
    <alternativeName>
        <fullName evidence="1">Proton channel protein M2</fullName>
    </alternativeName>
</protein>
<reference key="1">
    <citation type="journal article" date="1998" name="Science">
        <title>Characterization of an avian influenza A (H5N1) virus isolated from a child with a fatal respiratory illness.</title>
        <authorList>
            <person name="Subbarao K."/>
            <person name="Klimov A."/>
            <person name="Katz J."/>
            <person name="Regnery H."/>
            <person name="Lim W."/>
            <person name="Hall H."/>
            <person name="Perdue M."/>
            <person name="Swayne D."/>
            <person name="Bender C."/>
            <person name="Huang J."/>
            <person name="Hemphill M."/>
            <person name="Rowe T."/>
            <person name="Shaw M."/>
            <person name="Xu X."/>
            <person name="Fukuda K."/>
            <person name="Cox N."/>
        </authorList>
    </citation>
    <scope>NUCLEOTIDE SEQUENCE [GENOMIC RNA]</scope>
</reference>
<reference key="2">
    <citation type="journal article" date="1998" name="J. Virol.">
        <title>Comparisons of highly virulent H5N1 influenza A viruses isolated from humans and chickens from Hong Kong.</title>
        <authorList>
            <person name="Suarez D.L."/>
            <person name="Perdue M.L."/>
            <person name="Cox N."/>
            <person name="Rowe T."/>
            <person name="Bender C."/>
            <person name="Huang J."/>
            <person name="Swayne D.E."/>
        </authorList>
    </citation>
    <scope>NUCLEOTIDE SEQUENCE [GENOMIC RNA]</scope>
</reference>
<reference key="3">
    <citation type="journal article" date="2004" name="Virus Res.">
        <title>Assembly and budding of influenza virus.</title>
        <authorList>
            <person name="Nayak D.P."/>
            <person name="Hui E.K."/>
            <person name="Barman S."/>
        </authorList>
    </citation>
    <scope>REVIEW</scope>
</reference>
<reference key="4">
    <citation type="journal article" date="2003" name="FEBS Lett.">
        <title>Proton conduction through the M2 protein of the influenza A virus; a quantitative, mechanistic analysis of experimental data.</title>
        <authorList>
            <person name="Lear J.D."/>
        </authorList>
    </citation>
    <scope>REVIEW</scope>
</reference>
<reference key="5">
    <citation type="journal article" date="2003" name="FEBS Lett.">
        <title>Computational studies of proton transport through the M2 channel.</title>
        <authorList>
            <person name="Wu Y."/>
            <person name="Voth G.A."/>
        </authorList>
    </citation>
    <scope>REVIEW</scope>
</reference>
<accession>O70632</accession>
<accession>Q77XR7</accession>
<keyword id="KW-0002">3D-structure</keyword>
<keyword id="KW-0025">Alternative splicing</keyword>
<keyword id="KW-1015">Disulfide bond</keyword>
<keyword id="KW-1032">Host cell membrane</keyword>
<keyword id="KW-1043">Host membrane</keyword>
<keyword id="KW-0945">Host-virus interaction</keyword>
<keyword id="KW-0375">Hydrogen ion transport</keyword>
<keyword id="KW-1083">Inhibition of host autophagy by virus</keyword>
<keyword id="KW-0407">Ion channel</keyword>
<keyword id="KW-0406">Ion transport</keyword>
<keyword id="KW-0449">Lipoprotein</keyword>
<keyword id="KW-0472">Membrane</keyword>
<keyword id="KW-0564">Palmitate</keyword>
<keyword id="KW-0597">Phosphoprotein</keyword>
<keyword id="KW-0735">Signal-anchor</keyword>
<keyword id="KW-0812">Transmembrane</keyword>
<keyword id="KW-1133">Transmembrane helix</keyword>
<keyword id="KW-0813">Transport</keyword>
<keyword id="KW-1182">Viral ion channel</keyword>
<keyword id="KW-0946">Virion</keyword>
<feature type="chain" id="PRO_0000078884" description="Matrix protein 2">
    <location>
        <begin position="1"/>
        <end position="97"/>
    </location>
</feature>
<feature type="topological domain" description="Virion surface" evidence="1">
    <location>
        <begin position="1"/>
        <end position="22"/>
    </location>
</feature>
<feature type="transmembrane region" description="Helical; Signal-anchor for type III membrane protein" evidence="1">
    <location>
        <begin position="23"/>
        <end position="43"/>
    </location>
</feature>
<feature type="topological domain" description="Intravirion" evidence="1">
    <location>
        <begin position="44"/>
        <end position="97"/>
    </location>
</feature>
<feature type="region of interest" description="Disordered" evidence="2">
    <location>
        <begin position="60"/>
        <end position="80"/>
    </location>
</feature>
<feature type="site" description="Essential for channel activity, possibly by being protonated during channel activation, and by forming the channel gate and the selective filter" evidence="1">
    <location>
        <position position="37"/>
    </location>
</feature>
<feature type="site" description="Seems to be involved in pH gating" evidence="1">
    <location>
        <position position="41"/>
    </location>
</feature>
<feature type="modified residue" description="Phosphoserine; by host" evidence="1">
    <location>
        <position position="64"/>
    </location>
</feature>
<feature type="lipid moiety-binding region" description="S-palmitoyl cysteine; by host" evidence="1">
    <location>
        <position position="50"/>
    </location>
</feature>
<feature type="disulfide bond" description="Interchain (with C-17)" evidence="1">
    <location>
        <position position="17"/>
    </location>
</feature>
<feature type="disulfide bond" description="Interchain (with C-19)" evidence="1">
    <location>
        <position position="19"/>
    </location>
</feature>
<feature type="helix" evidence="3">
    <location>
        <begin position="26"/>
        <end position="45"/>
    </location>
</feature>
<gene>
    <name evidence="1" type="primary">M</name>
</gene>
<sequence length="97" mass="11177">MSLLTEVETLTRNGWGCRCSDSSDPLVVAASIIGILHLILWILDRLFFKCIYRRFKYGLKRGPSTEGVPESMREEYRQEQQNAVDVDDGHFVNIELE</sequence>
<organism>
    <name type="scientific">Influenza A virus (strain A/Hong Kong/156/1997 H5N1 genotype Gs/Gd)</name>
    <dbReference type="NCBI Taxonomy" id="130763"/>
    <lineage>
        <taxon>Viruses</taxon>
        <taxon>Riboviria</taxon>
        <taxon>Orthornavirae</taxon>
        <taxon>Negarnaviricota</taxon>
        <taxon>Polyploviricotina</taxon>
        <taxon>Insthoviricetes</taxon>
        <taxon>Articulavirales</taxon>
        <taxon>Orthomyxoviridae</taxon>
        <taxon>Alphainfluenzavirus</taxon>
        <taxon>Alphainfluenzavirus influenzae</taxon>
        <taxon>Influenza A virus</taxon>
    </lineage>
</organism>
<proteinExistence type="evidence at protein level"/>
<dbReference type="EMBL" id="AF036358">
    <property type="protein sequence ID" value="AAC34266.1"/>
    <property type="molecule type" value="Genomic_RNA"/>
</dbReference>
<dbReference type="EMBL" id="AF046090">
    <property type="protein sequence ID" value="AAC32091.1"/>
    <property type="molecule type" value="Genomic_RNA"/>
</dbReference>
<dbReference type="PDB" id="2KAD">
    <property type="method" value="NMR"/>
    <property type="chains" value="A/B/C/D=22-46"/>
</dbReference>
<dbReference type="PDB" id="2KQT">
    <property type="method" value="NMR"/>
    <property type="chains" value="A/B/C/D=22-46"/>
</dbReference>
<dbReference type="PDB" id="3C9J">
    <property type="method" value="X-ray"/>
    <property type="resolution" value="3.50 A"/>
    <property type="chains" value="A/B/C/D=22-46"/>
</dbReference>
<dbReference type="PDB" id="3LBW">
    <property type="method" value="X-ray"/>
    <property type="resolution" value="1.65 A"/>
    <property type="chains" value="A/B/C/D=25-46"/>
</dbReference>
<dbReference type="PDB" id="4RWB">
    <property type="method" value="X-ray"/>
    <property type="resolution" value="2.00 A"/>
    <property type="chains" value="A/B=25-46"/>
</dbReference>
<dbReference type="PDB" id="4RWC">
    <property type="method" value="X-ray"/>
    <property type="resolution" value="1.05 A"/>
    <property type="chains" value="A=25-46"/>
</dbReference>
<dbReference type="PDB" id="6MPL">
    <property type="method" value="X-ray"/>
    <property type="resolution" value="1.55 A"/>
    <property type="chains" value="A=25-46"/>
</dbReference>
<dbReference type="PDB" id="6MPM">
    <property type="method" value="X-ray"/>
    <property type="resolution" value="1.40 A"/>
    <property type="chains" value="A=25-46"/>
</dbReference>
<dbReference type="PDB" id="6MPN">
    <property type="method" value="X-ray"/>
    <property type="resolution" value="1.40 A"/>
    <property type="chains" value="A/B=25-46"/>
</dbReference>
<dbReference type="PDBsum" id="2KAD"/>
<dbReference type="PDBsum" id="2KQT"/>
<dbReference type="PDBsum" id="3C9J"/>
<dbReference type="PDBsum" id="3LBW"/>
<dbReference type="PDBsum" id="4RWB"/>
<dbReference type="PDBsum" id="4RWC"/>
<dbReference type="PDBsum" id="6MPL"/>
<dbReference type="PDBsum" id="6MPM"/>
<dbReference type="PDBsum" id="6MPN"/>
<dbReference type="SMR" id="O70632"/>
<dbReference type="DIP" id="DIP-60752N"/>
<dbReference type="IntAct" id="O70632">
    <property type="interactions" value="1"/>
</dbReference>
<dbReference type="EvolutionaryTrace" id="O70632"/>
<dbReference type="Proteomes" id="UP000008587">
    <property type="component" value="Genome"/>
</dbReference>
<dbReference type="GO" id="GO:0020002">
    <property type="term" value="C:host cell plasma membrane"/>
    <property type="evidence" value="ECO:0007669"/>
    <property type="project" value="UniProtKB-SubCell"/>
</dbReference>
<dbReference type="GO" id="GO:0016020">
    <property type="term" value="C:membrane"/>
    <property type="evidence" value="ECO:0007669"/>
    <property type="project" value="UniProtKB-UniRule"/>
</dbReference>
<dbReference type="GO" id="GO:0055036">
    <property type="term" value="C:virion membrane"/>
    <property type="evidence" value="ECO:0007669"/>
    <property type="project" value="UniProtKB-SubCell"/>
</dbReference>
<dbReference type="GO" id="GO:0042802">
    <property type="term" value="F:identical protein binding"/>
    <property type="evidence" value="ECO:0000353"/>
    <property type="project" value="IntAct"/>
</dbReference>
<dbReference type="GO" id="GO:0005216">
    <property type="term" value="F:monoatomic ion channel activity"/>
    <property type="evidence" value="ECO:0007669"/>
    <property type="project" value="UniProtKB-UniRule"/>
</dbReference>
<dbReference type="GO" id="GO:0015078">
    <property type="term" value="F:proton transmembrane transporter activity"/>
    <property type="evidence" value="ECO:0007669"/>
    <property type="project" value="UniProtKB-UniRule"/>
</dbReference>
<dbReference type="GO" id="GO:0051259">
    <property type="term" value="P:protein complex oligomerization"/>
    <property type="evidence" value="ECO:0007669"/>
    <property type="project" value="UniProtKB-UniRule"/>
</dbReference>
<dbReference type="GO" id="GO:0044694">
    <property type="term" value="P:symbiont genome entry into host cell via pore formation in plasma membrane"/>
    <property type="evidence" value="ECO:0007669"/>
    <property type="project" value="UniProtKB-UniRule"/>
</dbReference>
<dbReference type="GO" id="GO:0140321">
    <property type="term" value="P:symbiont-mediated suppression of host autophagy"/>
    <property type="evidence" value="ECO:0007669"/>
    <property type="project" value="UniProtKB-KW"/>
</dbReference>
<dbReference type="Gene3D" id="6.10.250.1640">
    <property type="match status" value="1"/>
</dbReference>
<dbReference type="HAMAP" id="MF_04069">
    <property type="entry name" value="INFV_M2"/>
    <property type="match status" value="1"/>
</dbReference>
<dbReference type="InterPro" id="IPR002089">
    <property type="entry name" value="Flu_M2"/>
</dbReference>
<dbReference type="Pfam" id="PF00599">
    <property type="entry name" value="Flu_M2"/>
    <property type="match status" value="1"/>
</dbReference>
<name>M2_I97A1</name>